<feature type="chain" id="PRO_0000418618" description="Futalosine hydrolase">
    <location>
        <begin position="1"/>
        <end position="235"/>
    </location>
</feature>
<proteinExistence type="evidence at protein level"/>
<accession>Q9KXN0</accession>
<accession>B5MG04</accession>
<dbReference type="EC" id="3.2.2.26" evidence="1"/>
<dbReference type="EMBL" id="AB447889">
    <property type="protein sequence ID" value="BAG71675.1"/>
    <property type="status" value="ALT_INIT"/>
    <property type="molecule type" value="Genomic_DNA"/>
</dbReference>
<dbReference type="EMBL" id="AL939119">
    <property type="protein sequence ID" value="CAB93401.1"/>
    <property type="status" value="ALT_INIT"/>
    <property type="molecule type" value="Genomic_DNA"/>
</dbReference>
<dbReference type="RefSeq" id="NP_628498.1">
    <property type="nucleotide sequence ID" value="NC_003888.3"/>
</dbReference>
<dbReference type="RefSeq" id="WP_016326870.1">
    <property type="nucleotide sequence ID" value="NZ_VNID01000026.1"/>
</dbReference>
<dbReference type="SMR" id="Q9KXN0"/>
<dbReference type="STRING" id="100226.gene:17761972"/>
<dbReference type="PaxDb" id="100226-SCO4327"/>
<dbReference type="KEGG" id="sco:SCO4327"/>
<dbReference type="PATRIC" id="fig|100226.15.peg.4396"/>
<dbReference type="eggNOG" id="COG0775">
    <property type="taxonomic scope" value="Bacteria"/>
</dbReference>
<dbReference type="HOGENOM" id="CLU_031248_3_0_11"/>
<dbReference type="InParanoid" id="Q9KXN0"/>
<dbReference type="OrthoDB" id="9788270at2"/>
<dbReference type="BRENDA" id="3.2.2.26">
    <property type="organism ID" value="5998"/>
</dbReference>
<dbReference type="UniPathway" id="UPA00079"/>
<dbReference type="Proteomes" id="UP000001973">
    <property type="component" value="Chromosome"/>
</dbReference>
<dbReference type="GO" id="GO:0005829">
    <property type="term" value="C:cytosol"/>
    <property type="evidence" value="ECO:0000318"/>
    <property type="project" value="GO_Central"/>
</dbReference>
<dbReference type="GO" id="GO:0008782">
    <property type="term" value="F:adenosylhomocysteine nucleosidase activity"/>
    <property type="evidence" value="ECO:0000318"/>
    <property type="project" value="GO_Central"/>
</dbReference>
<dbReference type="GO" id="GO:0008930">
    <property type="term" value="F:methylthioadenosine nucleosidase activity"/>
    <property type="evidence" value="ECO:0000318"/>
    <property type="project" value="GO_Central"/>
</dbReference>
<dbReference type="GO" id="GO:0019284">
    <property type="term" value="P:L-methionine salvage from S-adenosylmethionine"/>
    <property type="evidence" value="ECO:0000318"/>
    <property type="project" value="GO_Central"/>
</dbReference>
<dbReference type="GO" id="GO:0009234">
    <property type="term" value="P:menaquinone biosynthetic process"/>
    <property type="evidence" value="ECO:0007669"/>
    <property type="project" value="UniProtKB-UniRule"/>
</dbReference>
<dbReference type="GO" id="GO:0009116">
    <property type="term" value="P:nucleoside metabolic process"/>
    <property type="evidence" value="ECO:0007669"/>
    <property type="project" value="InterPro"/>
</dbReference>
<dbReference type="CDD" id="cd17766">
    <property type="entry name" value="futalosine_nucleosidase_MqnB"/>
    <property type="match status" value="1"/>
</dbReference>
<dbReference type="Gene3D" id="3.40.50.1580">
    <property type="entry name" value="Nucleoside phosphorylase domain"/>
    <property type="match status" value="1"/>
</dbReference>
<dbReference type="HAMAP" id="MF_00991">
    <property type="entry name" value="MqnB"/>
    <property type="match status" value="1"/>
</dbReference>
<dbReference type="InterPro" id="IPR019963">
    <property type="entry name" value="FL_hydrolase_MqnB"/>
</dbReference>
<dbReference type="InterPro" id="IPR000845">
    <property type="entry name" value="Nucleoside_phosphorylase_d"/>
</dbReference>
<dbReference type="InterPro" id="IPR035994">
    <property type="entry name" value="Nucleoside_phosphorylase_sf"/>
</dbReference>
<dbReference type="NCBIfam" id="TIGR03664">
    <property type="entry name" value="fut_nucase"/>
    <property type="match status" value="1"/>
</dbReference>
<dbReference type="NCBIfam" id="NF006087">
    <property type="entry name" value="PRK08236.1"/>
    <property type="match status" value="1"/>
</dbReference>
<dbReference type="PANTHER" id="PTHR46832">
    <property type="entry name" value="5'-METHYLTHIOADENOSINE/S-ADENOSYLHOMOCYSTEINE NUCLEOSIDASE"/>
    <property type="match status" value="1"/>
</dbReference>
<dbReference type="PANTHER" id="PTHR46832:SF2">
    <property type="entry name" value="FUTALOSINE HYDROLASE"/>
    <property type="match status" value="1"/>
</dbReference>
<dbReference type="Pfam" id="PF01048">
    <property type="entry name" value="PNP_UDP_1"/>
    <property type="match status" value="1"/>
</dbReference>
<dbReference type="SUPFAM" id="SSF53167">
    <property type="entry name" value="Purine and uridine phosphorylases"/>
    <property type="match status" value="1"/>
</dbReference>
<gene>
    <name evidence="1" type="primary">mqnB</name>
    <name type="ordered locus">SCO4327</name>
</gene>
<organism>
    <name type="scientific">Streptomyces coelicolor (strain ATCC BAA-471 / A3(2) / M145)</name>
    <dbReference type="NCBI Taxonomy" id="100226"/>
    <lineage>
        <taxon>Bacteria</taxon>
        <taxon>Bacillati</taxon>
        <taxon>Actinomycetota</taxon>
        <taxon>Actinomycetes</taxon>
        <taxon>Kitasatosporales</taxon>
        <taxon>Streptomycetaceae</taxon>
        <taxon>Streptomyces</taxon>
        <taxon>Streptomyces albidoflavus group</taxon>
    </lineage>
</organism>
<sequence length="235" mass="23448">MHLLVATAVSVERDAVARAFPAPGTEVSRPGITLHRLPDGWDLLAAGVGPARAAASTAAALTAAALDGRPYDLVVSAGIGGGFAPEAPVGSLVVADAITAADLGAETADGFLPVTDLGFGTVTHLPPAPLVRAAAEATGARPGTVLTGSTVTGTAARAALLRERHPGALAEAMEGFGVAEAAAAHGVPVLELRAVSNPVGPRDRAAWRIGEALAALTDAVGKLAPVLESWKPHER</sequence>
<evidence type="ECO:0000255" key="1">
    <source>
        <dbReference type="HAMAP-Rule" id="MF_00991"/>
    </source>
</evidence>
<evidence type="ECO:0000269" key="2">
    <source>
    </source>
</evidence>
<evidence type="ECO:0000269" key="3">
    <source>
    </source>
</evidence>
<evidence type="ECO:0000305" key="4"/>
<comment type="function">
    <text evidence="1 2 3">Catalyzes the hydrolysis of futalosine (FL) to dehypoxanthine futalosine (DHFL) and hypoxanthine, a step in the biosynthesis of menaquinone (MK, vitamin K2). Does not accept aminodeoxyfutalosine (AFL) as a substrate.</text>
</comment>
<comment type="catalytic activity">
    <reaction evidence="1 3">
        <text>futalosine + H2O = dehypoxanthine futalosine + hypoxanthine</text>
        <dbReference type="Rhea" id="RHEA:25904"/>
        <dbReference type="ChEBI" id="CHEBI:15377"/>
        <dbReference type="ChEBI" id="CHEBI:17368"/>
        <dbReference type="ChEBI" id="CHEBI:58863"/>
        <dbReference type="ChEBI" id="CHEBI:58864"/>
        <dbReference type="EC" id="3.2.2.26"/>
    </reaction>
</comment>
<comment type="pathway">
    <text evidence="1 2 3">Quinol/quinone metabolism; menaquinone biosynthesis.</text>
</comment>
<comment type="disruption phenotype">
    <text evidence="2">Mutants require menaquinone for their growth.</text>
</comment>
<comment type="similarity">
    <text evidence="1">Belongs to the PNP/UDP phosphorylase family. Futalosine hydrolase subfamily.</text>
</comment>
<comment type="sequence caution" evidence="4">
    <conflict type="erroneous initiation">
        <sequence resource="EMBL-CDS" id="BAG71675"/>
    </conflict>
    <text>Truncated N-terminus.</text>
</comment>
<comment type="sequence caution" evidence="4">
    <conflict type="erroneous initiation">
        <sequence resource="EMBL-CDS" id="CAB93401"/>
    </conflict>
    <text>Truncated N-terminus.</text>
</comment>
<keyword id="KW-0378">Hydrolase</keyword>
<keyword id="KW-0474">Menaquinone biosynthesis</keyword>
<keyword id="KW-1185">Reference proteome</keyword>
<protein>
    <recommendedName>
        <fullName evidence="1">Futalosine hydrolase</fullName>
        <shortName evidence="1">FL hydrolase</shortName>
        <ecNumber evidence="1">3.2.2.26</ecNumber>
    </recommendedName>
    <alternativeName>
        <fullName evidence="1">Futalosine nucleosidase</fullName>
    </alternativeName>
    <alternativeName>
        <fullName evidence="1">Menaquinone biosynthetic enzyme MqnB</fullName>
    </alternativeName>
</protein>
<name>MQNB_STRCO</name>
<reference key="1">
    <citation type="journal article" date="2008" name="Science">
        <title>An alternative menaquinone biosynthetic pathway operating in microorganisms.</title>
        <authorList>
            <person name="Hiratsuka T."/>
            <person name="Furihata K."/>
            <person name="Ishikawa J."/>
            <person name="Yamashita H."/>
            <person name="Itoh N."/>
            <person name="Seto H."/>
            <person name="Dairi T."/>
        </authorList>
    </citation>
    <scope>NUCLEOTIDE SEQUENCE [GENOMIC DNA]</scope>
    <scope>ROLE IN MENAQUINONE BIOSYNTHESIS</scope>
    <scope>PATHWAY</scope>
    <scope>DISRUPTION PHENOTYPE</scope>
    <source>
        <strain>ATCC BAA-471 / A3(2) / M145</strain>
    </source>
</reference>
<reference key="2">
    <citation type="journal article" date="2002" name="Nature">
        <title>Complete genome sequence of the model actinomycete Streptomyces coelicolor A3(2).</title>
        <authorList>
            <person name="Bentley S.D."/>
            <person name="Chater K.F."/>
            <person name="Cerdeno-Tarraga A.-M."/>
            <person name="Challis G.L."/>
            <person name="Thomson N.R."/>
            <person name="James K.D."/>
            <person name="Harris D.E."/>
            <person name="Quail M.A."/>
            <person name="Kieser H."/>
            <person name="Harper D."/>
            <person name="Bateman A."/>
            <person name="Brown S."/>
            <person name="Chandra G."/>
            <person name="Chen C.W."/>
            <person name="Collins M."/>
            <person name="Cronin A."/>
            <person name="Fraser A."/>
            <person name="Goble A."/>
            <person name="Hidalgo J."/>
            <person name="Hornsby T."/>
            <person name="Howarth S."/>
            <person name="Huang C.-H."/>
            <person name="Kieser T."/>
            <person name="Larke L."/>
            <person name="Murphy L.D."/>
            <person name="Oliver K."/>
            <person name="O'Neil S."/>
            <person name="Rabbinowitsch E."/>
            <person name="Rajandream M.A."/>
            <person name="Rutherford K.M."/>
            <person name="Rutter S."/>
            <person name="Seeger K."/>
            <person name="Saunders D."/>
            <person name="Sharp S."/>
            <person name="Squares R."/>
            <person name="Squares S."/>
            <person name="Taylor K."/>
            <person name="Warren T."/>
            <person name="Wietzorrek A."/>
            <person name="Woodward J.R."/>
            <person name="Barrell B.G."/>
            <person name="Parkhill J."/>
            <person name="Hopwood D.A."/>
        </authorList>
    </citation>
    <scope>NUCLEOTIDE SEQUENCE [LARGE SCALE GENOMIC DNA]</scope>
    <source>
        <strain>ATCC BAA-471 / A3(2) / M145</strain>
    </source>
</reference>
<reference key="3">
    <citation type="journal article" date="2011" name="Antimicrob. Agents Chemother.">
        <title>Diversity of the early step of the futalosine pathway.</title>
        <authorList>
            <person name="Arakawa C."/>
            <person name="Kuratsu M."/>
            <person name="Furihata K."/>
            <person name="Hiratsuka T."/>
            <person name="Itoh N."/>
            <person name="Seto H."/>
            <person name="Dairi T."/>
        </authorList>
    </citation>
    <scope>IDENTIFICATION OF START SITE</scope>
    <scope>FUNCTION</scope>
    <scope>CATALYTIC ACTIVITY</scope>
    <scope>SUBSTRATE SPECIFICITY</scope>
    <scope>PATHWAY</scope>
    <source>
        <strain>ATCC BAA-471 / A3(2) / M145</strain>
    </source>
</reference>